<evidence type="ECO:0000250" key="1">
    <source>
        <dbReference type="UniProtKB" id="O88828"/>
    </source>
</evidence>
<evidence type="ECO:0000250" key="2">
    <source>
        <dbReference type="UniProtKB" id="P61218"/>
    </source>
</evidence>
<evidence type="ECO:0000256" key="3">
    <source>
        <dbReference type="SAM" id="MobiDB-lite"/>
    </source>
</evidence>
<evidence type="ECO:0000269" key="4">
    <source>
    </source>
</evidence>
<evidence type="ECO:0000269" key="5">
    <source>
    </source>
</evidence>
<evidence type="ECO:0000269" key="6">
    <source>
    </source>
</evidence>
<evidence type="ECO:0000305" key="7"/>
<evidence type="ECO:0007829" key="8">
    <source>
        <dbReference type="PDB" id="5FLM"/>
    </source>
</evidence>
<comment type="function">
    <text evidence="2 4 5">DNA-dependent RNA polymerase catalyzes the transcription of DNA into RNA using the four ribonucleoside triphosphates as substrates. Common component of RNA polymerases I, II, and III which synthesize ribosomal RNA precursors, mRNA precursors and many functional non-coding RNAs, and small RNAs, such as 5S rRNA and tRNAs, respectively. Pol II is the central component of the basal RNA polymerase II transcription machinery. Pols are composed of mobile elements that move relative to each other. In Pol II, POLR2F/RPABC2 is part of the clamp element and together with parts of POLR2A/RPB1 and POLR2B/RPB2 forms a pocket to which the POLR2D/RPB4-POLR2G/RPB7 subcomplex binds.</text>
</comment>
<comment type="subunit">
    <text evidence="2 4 5 6">Component of the RNA polymerase I (Pol I), RNA polymerase II (Pol II) and RNA polymerase III (Pol III) complexes consisting of at least 13, 12 and 17 subunits, respectively (By similarity) (PubMed:26789250, PubMed:28892040). Pol I complex consists of a ten-subunit catalytic core composed of POLR1A/RPA1, POLR1B/RPA2, POLR1C/RPAC1, POLR1D/RPAC2, POLR1H/RPA12, POLR2E/RPABC1, POLR2F/RPABC2, POLR2H/RPABC3, POLR2K/RPABC4 and POLR2L/RPABC5; a mobile stalk subunit POLR1F/RPA43 protruding from the core and additional subunits homologous to general transcription factors POLR1E/RPA49 and POLR1G/RPA34. Part of Pol I pre-initiation complex (PIC), in which Pol I core assembles with RRN3 and promoter-bound UTBF and SL1/TIF-IB complex (By similarity). Pol II complex contains a ten-subunit catalytic core composed of POLR2A/RPB1, POLR2B/RPB2, POLR2C/RPB3, POLR2I/RPB9, POLR2J/RPB11, POLR2E/RPABC1, POLR2F/RPABC2, POLR2H/RPABC3, POLR2K/RPABC4 and POLR2L/RPABC5 and a mobile stalk composed of two subunits POLR2D/RPB4 and POLR2G/RPB7. Part of Pol II(G) complex, in which Pol II core associates with an additional subunit POLR2M; unlike conventional Pol II, Pol II(G) functions as a transcriptional repressor. Part of TBP-based Pol II pre-initiation complex (PIC), in which Pol II core assembles with general transcription factors and other specific initiation factors including GTF2E1, GTF2E2, GTF2F1, GTF2F2, TCEA1, ERCC2, ERCC3, GTF2H2, GTF2H3, GTF2H4, GTF2H5, GTF2A1, GTF2A2, GTF2B and TBP; this large multi-subunit PIC complex mediates DNA unwinding and targets Pol II core to the transcription start site where the first phosphodiester bond forms (PubMed:16769904, PubMed:26789250, PubMed:28892040). Pol III complex consists of a ten-subunit catalytic core composed of POLR3A/RPC1, POLR3B/RPC2, POLR1C/RPAC1, POLR1D/RPAC2, POLR3K/RPC10, POLR2E/RPABC1, POLR2F/RPABC2, POLR2H/RPABC3, POLR2K/RPABC4 and POLR2L/RPABC5; a mobile stalk composed of two subunits POLR3H/RPC8 and CRCP/RPC9, protruding from the core and functioning primarily in transcription initiation; and additional subunits homologous to general transcription factors of the RNA polymerase II machinery, POLR3C/RPC3-POLR3F/RPC6-POLR3G/RPC7 heterotrimer required for transcription initiation and POLR3D/RPC4-POLR3E/RPC5 heterodimer involved in both transcription initiation and termination.</text>
</comment>
<comment type="subcellular location">
    <subcellularLocation>
        <location evidence="2">Nucleus</location>
    </subcellularLocation>
    <subcellularLocation>
        <location evidence="2">Nucleus</location>
        <location evidence="2">Nucleolus</location>
    </subcellularLocation>
</comment>
<comment type="similarity">
    <text evidence="7">Belongs to the archaeal Rpo6/eukaryotic RPB6 RNA polymerase subunit family.</text>
</comment>
<accession>Q32PE0</accession>
<keyword id="KW-0002">3D-structure</keyword>
<keyword id="KW-0007">Acetylation</keyword>
<keyword id="KW-0240">DNA-directed RNA polymerase</keyword>
<keyword id="KW-0539">Nucleus</keyword>
<keyword id="KW-0597">Phosphoprotein</keyword>
<keyword id="KW-1185">Reference proteome</keyword>
<keyword id="KW-0804">Transcription</keyword>
<dbReference type="EMBL" id="BC108153">
    <property type="protein sequence ID" value="AAI08154.1"/>
    <property type="molecule type" value="mRNA"/>
</dbReference>
<dbReference type="PDB" id="5FLM">
    <property type="method" value="EM"/>
    <property type="resolution" value="3.40 A"/>
    <property type="chains" value="F=1-127"/>
</dbReference>
<dbReference type="PDB" id="5OIK">
    <property type="method" value="EM"/>
    <property type="resolution" value="3.70 A"/>
    <property type="chains" value="F=1-127"/>
</dbReference>
<dbReference type="PDBsum" id="5FLM"/>
<dbReference type="PDBsum" id="5OIK"/>
<dbReference type="SMR" id="Q32PE0"/>
<dbReference type="DIP" id="DIP-61191N"/>
<dbReference type="FunCoup" id="Q32PE0">
    <property type="interactions" value="1137"/>
</dbReference>
<dbReference type="IntAct" id="Q32PE0">
    <property type="interactions" value="3"/>
</dbReference>
<dbReference type="STRING" id="9913.ENSBTAP00000006328"/>
<dbReference type="PaxDb" id="9913-ENSBTAP00000006328"/>
<dbReference type="eggNOG" id="KOG3405">
    <property type="taxonomic scope" value="Eukaryota"/>
</dbReference>
<dbReference type="InParanoid" id="Q32PE0"/>
<dbReference type="OrthoDB" id="259769at2759"/>
<dbReference type="EvolutionaryTrace" id="Q32PE0"/>
<dbReference type="Proteomes" id="UP000009136">
    <property type="component" value="Unplaced"/>
</dbReference>
<dbReference type="GO" id="GO:0005634">
    <property type="term" value="C:nucleus"/>
    <property type="evidence" value="ECO:0000250"/>
    <property type="project" value="UniProtKB"/>
</dbReference>
<dbReference type="GO" id="GO:0005736">
    <property type="term" value="C:RNA polymerase I complex"/>
    <property type="evidence" value="ECO:0000318"/>
    <property type="project" value="GO_Central"/>
</dbReference>
<dbReference type="GO" id="GO:0005665">
    <property type="term" value="C:RNA polymerase II, core complex"/>
    <property type="evidence" value="ECO:0000314"/>
    <property type="project" value="UniProtKB"/>
</dbReference>
<dbReference type="GO" id="GO:0005666">
    <property type="term" value="C:RNA polymerase III complex"/>
    <property type="evidence" value="ECO:0000318"/>
    <property type="project" value="GO_Central"/>
</dbReference>
<dbReference type="GO" id="GO:0003677">
    <property type="term" value="F:DNA binding"/>
    <property type="evidence" value="ECO:0007669"/>
    <property type="project" value="InterPro"/>
</dbReference>
<dbReference type="GO" id="GO:0003899">
    <property type="term" value="F:DNA-directed RNA polymerase activity"/>
    <property type="evidence" value="ECO:0007669"/>
    <property type="project" value="InterPro"/>
</dbReference>
<dbReference type="GO" id="GO:0006360">
    <property type="term" value="P:transcription by RNA polymerase I"/>
    <property type="evidence" value="ECO:0000318"/>
    <property type="project" value="GO_Central"/>
</dbReference>
<dbReference type="GO" id="GO:0006366">
    <property type="term" value="P:transcription by RNA polymerase II"/>
    <property type="evidence" value="ECO:0000250"/>
    <property type="project" value="UniProtKB"/>
</dbReference>
<dbReference type="GO" id="GO:0042797">
    <property type="term" value="P:tRNA transcription by RNA polymerase III"/>
    <property type="evidence" value="ECO:0000318"/>
    <property type="project" value="GO_Central"/>
</dbReference>
<dbReference type="FunFam" id="3.90.940.10:FF:000003">
    <property type="entry name" value="DNA-directed RNA polymerases I, II, and III subunit RPABC2"/>
    <property type="match status" value="1"/>
</dbReference>
<dbReference type="Gene3D" id="3.90.940.10">
    <property type="match status" value="1"/>
</dbReference>
<dbReference type="InterPro" id="IPR020708">
    <property type="entry name" value="DNA-dir_RNA_polK_14-18kDa_CS"/>
</dbReference>
<dbReference type="InterPro" id="IPR006110">
    <property type="entry name" value="Pol_omega/Rpo6/RPB6"/>
</dbReference>
<dbReference type="InterPro" id="IPR028363">
    <property type="entry name" value="RPB6"/>
</dbReference>
<dbReference type="InterPro" id="IPR036161">
    <property type="entry name" value="RPB6/omega-like_sf"/>
</dbReference>
<dbReference type="InterPro" id="IPR006111">
    <property type="entry name" value="Rpo6/Rpb6"/>
</dbReference>
<dbReference type="NCBIfam" id="NF002208">
    <property type="entry name" value="PRK01099.1-3"/>
    <property type="match status" value="1"/>
</dbReference>
<dbReference type="PANTHER" id="PTHR47227">
    <property type="entry name" value="DNA-DIRECTED RNA POLYMERASE SUBUNIT K"/>
    <property type="match status" value="1"/>
</dbReference>
<dbReference type="PANTHER" id="PTHR47227:SF5">
    <property type="entry name" value="DNA-DIRECTED RNA POLYMERASES I, II, AND III SUBUNIT RPABC2"/>
    <property type="match status" value="1"/>
</dbReference>
<dbReference type="Pfam" id="PF01192">
    <property type="entry name" value="RNA_pol_Rpb6"/>
    <property type="match status" value="1"/>
</dbReference>
<dbReference type="PIRSF" id="PIRSF500154">
    <property type="entry name" value="RPB6"/>
    <property type="match status" value="1"/>
</dbReference>
<dbReference type="PIRSF" id="PIRSF000778">
    <property type="entry name" value="RpoK/RPB6"/>
    <property type="match status" value="1"/>
</dbReference>
<dbReference type="SMART" id="SM01409">
    <property type="entry name" value="RNA_pol_Rpb6"/>
    <property type="match status" value="1"/>
</dbReference>
<dbReference type="SUPFAM" id="SSF63562">
    <property type="entry name" value="RPB6/omega subunit-like"/>
    <property type="match status" value="1"/>
</dbReference>
<dbReference type="PROSITE" id="PS01111">
    <property type="entry name" value="RNA_POL_K_14KD"/>
    <property type="match status" value="1"/>
</dbReference>
<protein>
    <recommendedName>
        <fullName>DNA-directed RNA polymerases I, II, and III subunit RPABC2</fullName>
        <shortName>RNA polymerases I, II, and III subunit ABC2</shortName>
    </recommendedName>
    <alternativeName>
        <fullName>DNA-directed RNA polymerase II subunit F</fullName>
    </alternativeName>
    <alternativeName>
        <fullName>RPB6 homolog</fullName>
    </alternativeName>
</protein>
<name>RPAB2_BOVIN</name>
<reference key="1">
    <citation type="submission" date="2005-10" db="EMBL/GenBank/DDBJ databases">
        <authorList>
            <consortium name="NIH - Mammalian Gene Collection (MGC) project"/>
        </authorList>
    </citation>
    <scope>NUCLEOTIDE SEQUENCE [LARGE SCALE MRNA]</scope>
    <source>
        <strain>Crossbred X Angus</strain>
        <tissue>Liver</tissue>
    </source>
</reference>
<reference key="2">
    <citation type="journal article" date="2006" name="Proc. Natl. Acad. Sci. U.S.A.">
        <title>A Mediator-responsive form of metazoan RNA polymerase II.</title>
        <authorList>
            <person name="Hu X."/>
            <person name="Malik S."/>
            <person name="Negroiu C.C."/>
            <person name="Hubbard K."/>
            <person name="Velalar C.N."/>
            <person name="Hampton B."/>
            <person name="Grosu D."/>
            <person name="Catalano J."/>
            <person name="Roeder R.G."/>
            <person name="Gnatt A."/>
        </authorList>
    </citation>
    <scope>FUNCTION OF POL II</scope>
    <scope>SUBUNIT</scope>
    <scope>IDENTIFICATION IN THE POL II AND POL II(G) COMPLEXES</scope>
</reference>
<reference key="3">
    <citation type="journal article" date="2016" name="Nature">
        <title>Structure of transcribing mammalian RNA polymerase II.</title>
        <authorList>
            <person name="Bernecky C."/>
            <person name="Herzog F."/>
            <person name="Baumeister W."/>
            <person name="Plitzko J.M."/>
            <person name="Cramer P."/>
        </authorList>
    </citation>
    <scope>STRUCTURE BY ELECTRON MICROSCOPY (3.40 ANGSTROMS)</scope>
    <scope>SUBUNIT</scope>
    <scope>FUNCTION OF POL II</scope>
</reference>
<reference key="4">
    <citation type="journal article" date="2017" name="Nat. Struct. Mol. Biol.">
        <title>Structure of a transcribing RNA polymerase II-DSIF complex reveals a multidentate DNA-RNA clamp.</title>
        <authorList>
            <person name="Bernecky C."/>
            <person name="Plitzko J.M."/>
            <person name="Cramer P."/>
        </authorList>
    </citation>
    <scope>STRUCTURE BY ELECTRON MICROSCOPY (3.70 ANGSTROMS)</scope>
    <scope>SUBUNIT</scope>
</reference>
<gene>
    <name type="primary">POLR2F</name>
</gene>
<proteinExistence type="evidence at protein level"/>
<feature type="initiator methionine" description="Removed" evidence="2">
    <location>
        <position position="1"/>
    </location>
</feature>
<feature type="chain" id="PRO_0000291376" description="DNA-directed RNA polymerases I, II, and III subunit RPABC2">
    <location>
        <begin position="2"/>
        <end position="127"/>
    </location>
</feature>
<feature type="region of interest" description="Disordered" evidence="3">
    <location>
        <begin position="1"/>
        <end position="52"/>
    </location>
</feature>
<feature type="compositionally biased region" description="Acidic residues" evidence="3">
    <location>
        <begin position="1"/>
        <end position="32"/>
    </location>
</feature>
<feature type="modified residue" description="N-acetylserine" evidence="2">
    <location>
        <position position="2"/>
    </location>
</feature>
<feature type="modified residue" description="Phosphoserine; by CK2" evidence="1">
    <location>
        <position position="2"/>
    </location>
</feature>
<feature type="helix" evidence="8">
    <location>
        <begin position="59"/>
        <end position="74"/>
    </location>
</feature>
<feature type="helix" evidence="8">
    <location>
        <begin position="89"/>
        <end position="99"/>
    </location>
</feature>
<feature type="strand" evidence="8">
    <location>
        <begin position="104"/>
        <end position="109"/>
    </location>
</feature>
<feature type="strand" evidence="8">
    <location>
        <begin position="115"/>
        <end position="119"/>
    </location>
</feature>
<feature type="turn" evidence="8">
    <location>
        <begin position="120"/>
        <end position="122"/>
    </location>
</feature>
<organism>
    <name type="scientific">Bos taurus</name>
    <name type="common">Bovine</name>
    <dbReference type="NCBI Taxonomy" id="9913"/>
    <lineage>
        <taxon>Eukaryota</taxon>
        <taxon>Metazoa</taxon>
        <taxon>Chordata</taxon>
        <taxon>Craniata</taxon>
        <taxon>Vertebrata</taxon>
        <taxon>Euteleostomi</taxon>
        <taxon>Mammalia</taxon>
        <taxon>Eutheria</taxon>
        <taxon>Laurasiatheria</taxon>
        <taxon>Artiodactyla</taxon>
        <taxon>Ruminantia</taxon>
        <taxon>Pecora</taxon>
        <taxon>Bovidae</taxon>
        <taxon>Bovinae</taxon>
        <taxon>Bos</taxon>
    </lineage>
</organism>
<sequence length="127" mass="14448">MSDNEDNFDGDDFDDVEEDEGLDDLENAEEEGQVNVEILPSGERPQANQKRITTPYMTKYERARVLGTRALQIAMCAPVMVELEGETDPLLIAMKELKARKIPIIIRRYLPDGSYEDWGVDELIITD</sequence>